<feature type="chain" id="PRO_1000054923" description="Small ribosomal subunit protein uS17">
    <location>
        <begin position="1"/>
        <end position="90"/>
    </location>
</feature>
<dbReference type="EMBL" id="CP000458">
    <property type="protein sequence ID" value="ABK07111.1"/>
    <property type="molecule type" value="Genomic_DNA"/>
</dbReference>
<dbReference type="RefSeq" id="WP_006477189.1">
    <property type="nucleotide sequence ID" value="NC_008542.1"/>
</dbReference>
<dbReference type="SMR" id="A0K3N4"/>
<dbReference type="GeneID" id="93193442"/>
<dbReference type="KEGG" id="bch:Bcen2424_0357"/>
<dbReference type="HOGENOM" id="CLU_073626_1_1_4"/>
<dbReference type="GO" id="GO:0022627">
    <property type="term" value="C:cytosolic small ribosomal subunit"/>
    <property type="evidence" value="ECO:0007669"/>
    <property type="project" value="TreeGrafter"/>
</dbReference>
<dbReference type="GO" id="GO:0019843">
    <property type="term" value="F:rRNA binding"/>
    <property type="evidence" value="ECO:0007669"/>
    <property type="project" value="UniProtKB-UniRule"/>
</dbReference>
<dbReference type="GO" id="GO:0003735">
    <property type="term" value="F:structural constituent of ribosome"/>
    <property type="evidence" value="ECO:0007669"/>
    <property type="project" value="InterPro"/>
</dbReference>
<dbReference type="GO" id="GO:0006412">
    <property type="term" value="P:translation"/>
    <property type="evidence" value="ECO:0007669"/>
    <property type="project" value="UniProtKB-UniRule"/>
</dbReference>
<dbReference type="CDD" id="cd00364">
    <property type="entry name" value="Ribosomal_uS17"/>
    <property type="match status" value="1"/>
</dbReference>
<dbReference type="Gene3D" id="2.40.50.140">
    <property type="entry name" value="Nucleic acid-binding proteins"/>
    <property type="match status" value="1"/>
</dbReference>
<dbReference type="HAMAP" id="MF_01345_B">
    <property type="entry name" value="Ribosomal_uS17_B"/>
    <property type="match status" value="1"/>
</dbReference>
<dbReference type="InterPro" id="IPR012340">
    <property type="entry name" value="NA-bd_OB-fold"/>
</dbReference>
<dbReference type="InterPro" id="IPR000266">
    <property type="entry name" value="Ribosomal_uS17"/>
</dbReference>
<dbReference type="InterPro" id="IPR019984">
    <property type="entry name" value="Ribosomal_uS17_bact/chlr"/>
</dbReference>
<dbReference type="InterPro" id="IPR019979">
    <property type="entry name" value="Ribosomal_uS17_CS"/>
</dbReference>
<dbReference type="NCBIfam" id="NF004123">
    <property type="entry name" value="PRK05610.1"/>
    <property type="match status" value="1"/>
</dbReference>
<dbReference type="NCBIfam" id="TIGR03635">
    <property type="entry name" value="uS17_bact"/>
    <property type="match status" value="1"/>
</dbReference>
<dbReference type="PANTHER" id="PTHR10744">
    <property type="entry name" value="40S RIBOSOMAL PROTEIN S11 FAMILY MEMBER"/>
    <property type="match status" value="1"/>
</dbReference>
<dbReference type="PANTHER" id="PTHR10744:SF1">
    <property type="entry name" value="SMALL RIBOSOMAL SUBUNIT PROTEIN US17M"/>
    <property type="match status" value="1"/>
</dbReference>
<dbReference type="Pfam" id="PF00366">
    <property type="entry name" value="Ribosomal_S17"/>
    <property type="match status" value="1"/>
</dbReference>
<dbReference type="PRINTS" id="PR00973">
    <property type="entry name" value="RIBOSOMALS17"/>
</dbReference>
<dbReference type="SUPFAM" id="SSF50249">
    <property type="entry name" value="Nucleic acid-binding proteins"/>
    <property type="match status" value="1"/>
</dbReference>
<dbReference type="PROSITE" id="PS00056">
    <property type="entry name" value="RIBOSOMAL_S17"/>
    <property type="match status" value="1"/>
</dbReference>
<evidence type="ECO:0000255" key="1">
    <source>
        <dbReference type="HAMAP-Rule" id="MF_01345"/>
    </source>
</evidence>
<evidence type="ECO:0000305" key="2"/>
<proteinExistence type="inferred from homology"/>
<keyword id="KW-0687">Ribonucleoprotein</keyword>
<keyword id="KW-0689">Ribosomal protein</keyword>
<keyword id="KW-0694">RNA-binding</keyword>
<keyword id="KW-0699">rRNA-binding</keyword>
<gene>
    <name evidence="1" type="primary">rpsQ</name>
    <name type="ordered locus">Bcen2424_0357</name>
</gene>
<organism>
    <name type="scientific">Burkholderia cenocepacia (strain HI2424)</name>
    <dbReference type="NCBI Taxonomy" id="331272"/>
    <lineage>
        <taxon>Bacteria</taxon>
        <taxon>Pseudomonadati</taxon>
        <taxon>Pseudomonadota</taxon>
        <taxon>Betaproteobacteria</taxon>
        <taxon>Burkholderiales</taxon>
        <taxon>Burkholderiaceae</taxon>
        <taxon>Burkholderia</taxon>
        <taxon>Burkholderia cepacia complex</taxon>
    </lineage>
</organism>
<sequence>MNDSVKTSLKRTLVGRVVSNKMDKTVTVLIEHRVKHPIYGKYVVRSKKYHAHDEANTYNEGDLVEIQETRPVSKTKAWTVSRLVEAARVI</sequence>
<protein>
    <recommendedName>
        <fullName evidence="1">Small ribosomal subunit protein uS17</fullName>
    </recommendedName>
    <alternativeName>
        <fullName evidence="2">30S ribosomal protein S17</fullName>
    </alternativeName>
</protein>
<comment type="function">
    <text evidence="1">One of the primary rRNA binding proteins, it binds specifically to the 5'-end of 16S ribosomal RNA.</text>
</comment>
<comment type="subunit">
    <text evidence="1">Part of the 30S ribosomal subunit.</text>
</comment>
<comment type="similarity">
    <text evidence="1">Belongs to the universal ribosomal protein uS17 family.</text>
</comment>
<reference key="1">
    <citation type="submission" date="2006-08" db="EMBL/GenBank/DDBJ databases">
        <title>Complete sequence of chromosome 1 of Burkholderia cenocepacia HI2424.</title>
        <authorList>
            <person name="Copeland A."/>
            <person name="Lucas S."/>
            <person name="Lapidus A."/>
            <person name="Barry K."/>
            <person name="Detter J.C."/>
            <person name="Glavina del Rio T."/>
            <person name="Hammon N."/>
            <person name="Israni S."/>
            <person name="Pitluck S."/>
            <person name="Chain P."/>
            <person name="Malfatti S."/>
            <person name="Shin M."/>
            <person name="Vergez L."/>
            <person name="Schmutz J."/>
            <person name="Larimer F."/>
            <person name="Land M."/>
            <person name="Hauser L."/>
            <person name="Kyrpides N."/>
            <person name="Kim E."/>
            <person name="LiPuma J.J."/>
            <person name="Gonzalez C.F."/>
            <person name="Konstantinidis K."/>
            <person name="Tiedje J.M."/>
            <person name="Richardson P."/>
        </authorList>
    </citation>
    <scope>NUCLEOTIDE SEQUENCE [LARGE SCALE GENOMIC DNA]</scope>
    <source>
        <strain>HI2424</strain>
    </source>
</reference>
<name>RS17_BURCH</name>
<accession>A0K3N4</accession>